<dbReference type="EC" id="4.2.3.5"/>
<dbReference type="EMBL" id="Z21796">
    <property type="protein sequence ID" value="CAA79859.1"/>
    <property type="molecule type" value="mRNA"/>
</dbReference>
<dbReference type="PIR" id="S40410">
    <property type="entry name" value="S40410"/>
</dbReference>
<dbReference type="RefSeq" id="NP_001234422.1">
    <property type="nucleotide sequence ID" value="NM_001247493.2"/>
</dbReference>
<dbReference type="SMR" id="Q42884"/>
<dbReference type="FunCoup" id="Q42884">
    <property type="interactions" value="1106"/>
</dbReference>
<dbReference type="STRING" id="4081.Q42884"/>
<dbReference type="PaxDb" id="4081-Solyc04g049350.2.1"/>
<dbReference type="GeneID" id="544154"/>
<dbReference type="KEGG" id="sly:544154"/>
<dbReference type="eggNOG" id="KOG4492">
    <property type="taxonomic scope" value="Eukaryota"/>
</dbReference>
<dbReference type="HOGENOM" id="CLU_034547_0_1_1"/>
<dbReference type="InParanoid" id="Q42884"/>
<dbReference type="OrthoDB" id="1721239at2759"/>
<dbReference type="PhylomeDB" id="Q42884"/>
<dbReference type="UniPathway" id="UPA00053">
    <property type="reaction ID" value="UER00090"/>
</dbReference>
<dbReference type="Proteomes" id="UP000004994">
    <property type="component" value="Unplaced"/>
</dbReference>
<dbReference type="GO" id="GO:0009507">
    <property type="term" value="C:chloroplast"/>
    <property type="evidence" value="ECO:0007669"/>
    <property type="project" value="UniProtKB-SubCell"/>
</dbReference>
<dbReference type="GO" id="GO:0005829">
    <property type="term" value="C:cytosol"/>
    <property type="evidence" value="ECO:0000318"/>
    <property type="project" value="GO_Central"/>
</dbReference>
<dbReference type="GO" id="GO:0004107">
    <property type="term" value="F:chorismate synthase activity"/>
    <property type="evidence" value="ECO:0000318"/>
    <property type="project" value="GO_Central"/>
</dbReference>
<dbReference type="GO" id="GO:0010181">
    <property type="term" value="F:FMN binding"/>
    <property type="evidence" value="ECO:0000318"/>
    <property type="project" value="GO_Central"/>
</dbReference>
<dbReference type="GO" id="GO:0008652">
    <property type="term" value="P:amino acid biosynthetic process"/>
    <property type="evidence" value="ECO:0007669"/>
    <property type="project" value="UniProtKB-KW"/>
</dbReference>
<dbReference type="GO" id="GO:0009073">
    <property type="term" value="P:aromatic amino acid family biosynthetic process"/>
    <property type="evidence" value="ECO:0000318"/>
    <property type="project" value="GO_Central"/>
</dbReference>
<dbReference type="GO" id="GO:0009423">
    <property type="term" value="P:chorismate biosynthetic process"/>
    <property type="evidence" value="ECO:0000318"/>
    <property type="project" value="GO_Central"/>
</dbReference>
<dbReference type="CDD" id="cd07304">
    <property type="entry name" value="Chorismate_synthase"/>
    <property type="match status" value="1"/>
</dbReference>
<dbReference type="FunFam" id="3.60.150.10:FF:000003">
    <property type="entry name" value="Chorismate synthase"/>
    <property type="match status" value="1"/>
</dbReference>
<dbReference type="Gene3D" id="3.60.150.10">
    <property type="entry name" value="Chorismate synthase AroC"/>
    <property type="match status" value="1"/>
</dbReference>
<dbReference type="HAMAP" id="MF_00300">
    <property type="entry name" value="Chorismate_synth"/>
    <property type="match status" value="1"/>
</dbReference>
<dbReference type="InterPro" id="IPR000453">
    <property type="entry name" value="Chorismate_synth"/>
</dbReference>
<dbReference type="InterPro" id="IPR035904">
    <property type="entry name" value="Chorismate_synth_AroC_sf"/>
</dbReference>
<dbReference type="InterPro" id="IPR020541">
    <property type="entry name" value="Chorismate_synthase_CS"/>
</dbReference>
<dbReference type="NCBIfam" id="TIGR00033">
    <property type="entry name" value="aroC"/>
    <property type="match status" value="1"/>
</dbReference>
<dbReference type="NCBIfam" id="NF003793">
    <property type="entry name" value="PRK05382.1"/>
    <property type="match status" value="1"/>
</dbReference>
<dbReference type="PANTHER" id="PTHR21085">
    <property type="entry name" value="CHORISMATE SYNTHASE"/>
    <property type="match status" value="1"/>
</dbReference>
<dbReference type="PANTHER" id="PTHR21085:SF1">
    <property type="entry name" value="CHORISMATE SYNTHASE 1, CHLOROPLASTIC"/>
    <property type="match status" value="1"/>
</dbReference>
<dbReference type="Pfam" id="PF01264">
    <property type="entry name" value="Chorismate_synt"/>
    <property type="match status" value="1"/>
</dbReference>
<dbReference type="SUPFAM" id="SSF103263">
    <property type="entry name" value="Chorismate synthase, AroC"/>
    <property type="match status" value="1"/>
</dbReference>
<dbReference type="PROSITE" id="PS00787">
    <property type="entry name" value="CHORISMATE_SYNTHASE_1"/>
    <property type="match status" value="1"/>
</dbReference>
<dbReference type="PROSITE" id="PS00788">
    <property type="entry name" value="CHORISMATE_SYNTHASE_2"/>
    <property type="match status" value="1"/>
</dbReference>
<dbReference type="PROSITE" id="PS00789">
    <property type="entry name" value="CHORISMATE_SYNTHASE_3"/>
    <property type="match status" value="1"/>
</dbReference>
<name>AROC1_SOLLC</name>
<proteinExistence type="evidence at transcript level"/>
<sequence>MASFVPTKQFVGASSSSDIGSSRLVSLQLPSKFSSSNFHLPSRPSQLKRLEIQAAGSTFGNYFRVTTFGESHGGGVGCIIDGCPPRLPLSESDMQVELDRRRPGQSRITTPRKETDTCKISSGTADGLTTGSPIKVEVPNTDQRGNDYSEMSLAYRPSHADATYDFKYGVRSVQGGGRSSARETIGRVAAGAVAKKILKLYSGAEVLAYVSQVHQVVLPEDLIDHQNVTLEQIESNIVRCPDPEYAEKMIAAIDAVRVRGDSVGGVVTCIVRNLPRGLGTPVFDKLEAELAKACMSLPATKGFEFGSGFAGTFMTGSEHNDEFYMDEHGRIRTRTNRSGGIQGGISNGEVINMRIGFKPTSTISRKQQTVTRDKHETELIARGRHDPCVVPRAVPMVEAMVALVLVDQLMAQYSQCMMFPINPELQEPLQSSPESAEVTL</sequence>
<keyword id="KW-0028">Amino-acid biosynthesis</keyword>
<keyword id="KW-0057">Aromatic amino acid biosynthesis</keyword>
<keyword id="KW-0150">Chloroplast</keyword>
<keyword id="KW-0456">Lyase</keyword>
<keyword id="KW-0934">Plastid</keyword>
<keyword id="KW-1185">Reference proteome</keyword>
<keyword id="KW-0809">Transit peptide</keyword>
<comment type="function">
    <text>Catalyzes the last common step of the biosynthesis of aromatic amino acids, produced via the shikimic acid pathway.</text>
</comment>
<comment type="catalytic activity">
    <reaction>
        <text>5-O-(1-carboxyvinyl)-3-phosphoshikimate = chorismate + phosphate</text>
        <dbReference type="Rhea" id="RHEA:21020"/>
        <dbReference type="ChEBI" id="CHEBI:29748"/>
        <dbReference type="ChEBI" id="CHEBI:43474"/>
        <dbReference type="ChEBI" id="CHEBI:57701"/>
        <dbReference type="EC" id="4.2.3.5"/>
    </reaction>
</comment>
<comment type="cofactor">
    <cofactor>
        <name>FMNH2</name>
        <dbReference type="ChEBI" id="CHEBI:57618"/>
    </cofactor>
</comment>
<comment type="pathway">
    <text>Metabolic intermediate biosynthesis; chorismate biosynthesis; chorismate from D-erythrose 4-phosphate and phosphoenolpyruvate: step 7/7.</text>
</comment>
<comment type="subunit">
    <text evidence="1">Homotetramer.</text>
</comment>
<comment type="subcellular location">
    <subcellularLocation>
        <location>Plastid</location>
        <location>Chloroplast</location>
    </subcellularLocation>
</comment>
<comment type="tissue specificity">
    <text>Predominantly expressed in flowers and roots and, to a lesser extent, in stems, leaves, and cotyledons.</text>
</comment>
<comment type="similarity">
    <text evidence="4">Belongs to the chorismate synthase family.</text>
</comment>
<gene>
    <name type="primary">CS1</name>
</gene>
<reference key="1">
    <citation type="journal article" date="1993" name="Plant Mol. Biol.">
        <title>Differential expression of tomato (Lycopersicon esculentum L.) genes encoding shikimate pathway isoenzymes. II. Chorismate synthase.</title>
        <authorList>
            <person name="Goerlach J."/>
            <person name="Schmid J."/>
            <person name="Amrheim N."/>
        </authorList>
    </citation>
    <scope>NUCLEOTIDE SEQUENCE [MRNA]</scope>
    <source>
        <strain>cv. UC82B</strain>
    </source>
</reference>
<accession>Q42884</accession>
<organism>
    <name type="scientific">Solanum lycopersicum</name>
    <name type="common">Tomato</name>
    <name type="synonym">Lycopersicon esculentum</name>
    <dbReference type="NCBI Taxonomy" id="4081"/>
    <lineage>
        <taxon>Eukaryota</taxon>
        <taxon>Viridiplantae</taxon>
        <taxon>Streptophyta</taxon>
        <taxon>Embryophyta</taxon>
        <taxon>Tracheophyta</taxon>
        <taxon>Spermatophyta</taxon>
        <taxon>Magnoliopsida</taxon>
        <taxon>eudicotyledons</taxon>
        <taxon>Gunneridae</taxon>
        <taxon>Pentapetalae</taxon>
        <taxon>asterids</taxon>
        <taxon>lamiids</taxon>
        <taxon>Solanales</taxon>
        <taxon>Solanaceae</taxon>
        <taxon>Solanoideae</taxon>
        <taxon>Solaneae</taxon>
        <taxon>Solanum</taxon>
        <taxon>Solanum subgen. Lycopersicon</taxon>
    </lineage>
</organism>
<protein>
    <recommendedName>
        <fullName>Chorismate synthase 1, chloroplastic</fullName>
        <ecNumber>4.2.3.5</ecNumber>
    </recommendedName>
    <alternativeName>
        <fullName>5-enolpyruvylshikimate-3-phosphate phospholyase 1</fullName>
    </alternativeName>
</protein>
<feature type="transit peptide" description="Chloroplast" evidence="2">
    <location>
        <begin position="1"/>
        <end position="54"/>
    </location>
</feature>
<feature type="chain" id="PRO_0000002296" description="Chorismate synthase 1, chloroplastic">
    <location>
        <begin position="55"/>
        <end position="440"/>
    </location>
</feature>
<feature type="region of interest" description="Disordered" evidence="3">
    <location>
        <begin position="100"/>
        <end position="147"/>
    </location>
</feature>
<feature type="compositionally biased region" description="Polar residues" evidence="3">
    <location>
        <begin position="118"/>
        <end position="132"/>
    </location>
</feature>
<evidence type="ECO:0000250" key="1"/>
<evidence type="ECO:0000255" key="2"/>
<evidence type="ECO:0000256" key="3">
    <source>
        <dbReference type="SAM" id="MobiDB-lite"/>
    </source>
</evidence>
<evidence type="ECO:0000305" key="4"/>